<reference key="1">
    <citation type="journal article" date="2004" name="Nature">
        <title>Genome evolution in yeasts.</title>
        <authorList>
            <person name="Dujon B."/>
            <person name="Sherman D."/>
            <person name="Fischer G."/>
            <person name="Durrens P."/>
            <person name="Casaregola S."/>
            <person name="Lafontaine I."/>
            <person name="de Montigny J."/>
            <person name="Marck C."/>
            <person name="Neuveglise C."/>
            <person name="Talla E."/>
            <person name="Goffard N."/>
            <person name="Frangeul L."/>
            <person name="Aigle M."/>
            <person name="Anthouard V."/>
            <person name="Babour A."/>
            <person name="Barbe V."/>
            <person name="Barnay S."/>
            <person name="Blanchin S."/>
            <person name="Beckerich J.-M."/>
            <person name="Beyne E."/>
            <person name="Bleykasten C."/>
            <person name="Boisrame A."/>
            <person name="Boyer J."/>
            <person name="Cattolico L."/>
            <person name="Confanioleri F."/>
            <person name="de Daruvar A."/>
            <person name="Despons L."/>
            <person name="Fabre E."/>
            <person name="Fairhead C."/>
            <person name="Ferry-Dumazet H."/>
            <person name="Groppi A."/>
            <person name="Hantraye F."/>
            <person name="Hennequin C."/>
            <person name="Jauniaux N."/>
            <person name="Joyet P."/>
            <person name="Kachouri R."/>
            <person name="Kerrest A."/>
            <person name="Koszul R."/>
            <person name="Lemaire M."/>
            <person name="Lesur I."/>
            <person name="Ma L."/>
            <person name="Muller H."/>
            <person name="Nicaud J.-M."/>
            <person name="Nikolski M."/>
            <person name="Oztas S."/>
            <person name="Ozier-Kalogeropoulos O."/>
            <person name="Pellenz S."/>
            <person name="Potier S."/>
            <person name="Richard G.-F."/>
            <person name="Straub M.-L."/>
            <person name="Suleau A."/>
            <person name="Swennen D."/>
            <person name="Tekaia F."/>
            <person name="Wesolowski-Louvel M."/>
            <person name="Westhof E."/>
            <person name="Wirth B."/>
            <person name="Zeniou-Meyer M."/>
            <person name="Zivanovic Y."/>
            <person name="Bolotin-Fukuhara M."/>
            <person name="Thierry A."/>
            <person name="Bouchier C."/>
            <person name="Caudron B."/>
            <person name="Scarpelli C."/>
            <person name="Gaillardin C."/>
            <person name="Weissenbach J."/>
            <person name="Wincker P."/>
            <person name="Souciet J.-L."/>
        </authorList>
    </citation>
    <scope>NUCLEOTIDE SEQUENCE [LARGE SCALE GENOMIC DNA]</scope>
    <source>
        <strain>ATCC 2001 / BCRC 20586 / JCM 3761 / NBRC 0622 / NRRL Y-65 / CBS 138</strain>
    </source>
</reference>
<accession>Q6FJC7</accession>
<keyword id="KW-0010">Activator</keyword>
<keyword id="KW-0156">Chromatin regulator</keyword>
<keyword id="KW-0175">Coiled coil</keyword>
<keyword id="KW-0539">Nucleus</keyword>
<keyword id="KW-1185">Reference proteome</keyword>
<keyword id="KW-0804">Transcription</keyword>
<keyword id="KW-0805">Transcription regulation</keyword>
<protein>
    <recommendedName>
        <fullName>Transcriptional regulatory protein LGE1</fullName>
    </recommendedName>
</protein>
<sequence>MSDERYQSRYGRYDSGRGGRSGYYSNYQNSSHHRSNDGPNTNTHGPSNGNGNSGGYYHGYYNRHGSMNGRAASSGRGYYGGHNTHITSAPHNNPNAYSRAPATGNTSYTGSYYSRGGNSSGRGGYSSYNRGGYHASHQYNNGGYYHRNNNYNSSYTERQKSVSGDSATSGGMKYTSSHRTTHVTHPAHPPITIQRSGSNGNGVAQGNASSGEVPTAPRRETTAQNNGRDKREEQLKKYGISNMAQGYLEIMDQNSSSTTSVTQTEIELDEKLREMNSQVFRTMCELALVENQYTRDTLNVQLTQEKLDTLLLS</sequence>
<evidence type="ECO:0000250" key="1"/>
<evidence type="ECO:0000256" key="2">
    <source>
        <dbReference type="SAM" id="MobiDB-lite"/>
    </source>
</evidence>
<proteinExistence type="inferred from homology"/>
<name>LGE1_CANGA</name>
<gene>
    <name type="primary">LGE1</name>
    <name type="ordered locus">CAGL0M07337g</name>
</gene>
<dbReference type="EMBL" id="CR380959">
    <property type="protein sequence ID" value="CAG62643.1"/>
    <property type="molecule type" value="Genomic_DNA"/>
</dbReference>
<dbReference type="RefSeq" id="XP_449667.1">
    <property type="nucleotide sequence ID" value="XM_449667.1"/>
</dbReference>
<dbReference type="STRING" id="284593.Q6FJC7"/>
<dbReference type="EnsemblFungi" id="CAGL0M07337g-T">
    <property type="protein sequence ID" value="CAGL0M07337g-T-p1"/>
    <property type="gene ID" value="CAGL0M07337g"/>
</dbReference>
<dbReference type="KEGG" id="cgr:2891716"/>
<dbReference type="CGD" id="CAL0136585">
    <property type="gene designation" value="CAGL0M07337g"/>
</dbReference>
<dbReference type="VEuPathDB" id="FungiDB:CAGL0M07337g"/>
<dbReference type="eggNOG" id="ENOG502SA4A">
    <property type="taxonomic scope" value="Eukaryota"/>
</dbReference>
<dbReference type="HOGENOM" id="CLU_888515_0_0_1"/>
<dbReference type="InParanoid" id="Q6FJC7"/>
<dbReference type="OMA" id="YSANSRH"/>
<dbReference type="Proteomes" id="UP000002428">
    <property type="component" value="Chromosome M"/>
</dbReference>
<dbReference type="GO" id="GO:0005634">
    <property type="term" value="C:nucleus"/>
    <property type="evidence" value="ECO:0007669"/>
    <property type="project" value="UniProtKB-SubCell"/>
</dbReference>
<dbReference type="GO" id="GO:0006325">
    <property type="term" value="P:chromatin organization"/>
    <property type="evidence" value="ECO:0007669"/>
    <property type="project" value="UniProtKB-KW"/>
</dbReference>
<dbReference type="CDD" id="cd22897">
    <property type="entry name" value="Lge1"/>
    <property type="match status" value="1"/>
</dbReference>
<dbReference type="InterPro" id="IPR021581">
    <property type="entry name" value="Tscrpt_reg_Lge1"/>
</dbReference>
<dbReference type="Pfam" id="PF11488">
    <property type="entry name" value="Lge1"/>
    <property type="match status" value="1"/>
</dbReference>
<organism>
    <name type="scientific">Candida glabrata (strain ATCC 2001 / BCRC 20586 / JCM 3761 / NBRC 0622 / NRRL Y-65 / CBS 138)</name>
    <name type="common">Yeast</name>
    <name type="synonym">Nakaseomyces glabratus</name>
    <dbReference type="NCBI Taxonomy" id="284593"/>
    <lineage>
        <taxon>Eukaryota</taxon>
        <taxon>Fungi</taxon>
        <taxon>Dikarya</taxon>
        <taxon>Ascomycota</taxon>
        <taxon>Saccharomycotina</taxon>
        <taxon>Saccharomycetes</taxon>
        <taxon>Saccharomycetales</taxon>
        <taxon>Saccharomycetaceae</taxon>
        <taxon>Nakaseomyces</taxon>
    </lineage>
</organism>
<comment type="function">
    <text evidence="1">Involved in transcriptional activation. Also required for ubiquitination of histone H2B to form H2BK123ub1. H2BK123ub1 gives a specific tag for epigenetic transcriptional activation, telomeric silencing, and is also a prerequisite for H3K4me and H3K79me formation. Its precise role in H2BK123ub1 formation however is unclear (By similarity).</text>
</comment>
<comment type="subcellular location">
    <subcellularLocation>
        <location evidence="1">Nucleus</location>
    </subcellularLocation>
</comment>
<feature type="chain" id="PRO_0000076232" description="Transcriptional regulatory protein LGE1">
    <location>
        <begin position="1"/>
        <end position="313"/>
    </location>
</feature>
<feature type="region of interest" description="Disordered" evidence="2">
    <location>
        <begin position="1"/>
        <end position="56"/>
    </location>
</feature>
<feature type="region of interest" description="Disordered" evidence="2">
    <location>
        <begin position="83"/>
        <end position="102"/>
    </location>
</feature>
<feature type="region of interest" description="Disordered" evidence="2">
    <location>
        <begin position="144"/>
        <end position="233"/>
    </location>
</feature>
<feature type="compositionally biased region" description="Basic and acidic residues" evidence="2">
    <location>
        <begin position="1"/>
        <end position="17"/>
    </location>
</feature>
<feature type="compositionally biased region" description="Low complexity" evidence="2">
    <location>
        <begin position="38"/>
        <end position="50"/>
    </location>
</feature>
<feature type="compositionally biased region" description="Polar residues" evidence="2">
    <location>
        <begin position="84"/>
        <end position="96"/>
    </location>
</feature>
<feature type="compositionally biased region" description="Low complexity" evidence="2">
    <location>
        <begin position="144"/>
        <end position="155"/>
    </location>
</feature>
<feature type="compositionally biased region" description="Polar residues" evidence="2">
    <location>
        <begin position="161"/>
        <end position="178"/>
    </location>
</feature>
<feature type="compositionally biased region" description="Polar residues" evidence="2">
    <location>
        <begin position="193"/>
        <end position="212"/>
    </location>
</feature>
<feature type="compositionally biased region" description="Basic and acidic residues" evidence="2">
    <location>
        <begin position="217"/>
        <end position="233"/>
    </location>
</feature>